<sequence length="235" mass="25545">MALRTLASKKVLSFPFGGAGRPLAAAASARGVTTVTLPDLSYDFGALEPAISGEIMRLHHQKHHATYVANYNKALEQLETAVSKGDASAVVQLQAAIKFNGGGHVNHSIFWKNLKPISEGGGEPPHGKLGWAIDEDFGSFEALVKKMNAEGAALQGSGWVWLALDKEAKKVSVETTANQDPLVTKGASLVPLLGIDVWEHAYYLQYKNVRPDYLNNIWKVMNWKYAGEVYENVLA</sequence>
<proteinExistence type="evidence at transcript level"/>
<comment type="function">
    <text>Destroys superoxide anion radicals which are normally produced within the cells and which are toxic to biological systems.</text>
</comment>
<comment type="catalytic activity">
    <reaction>
        <text>2 superoxide + 2 H(+) = H2O2 + O2</text>
        <dbReference type="Rhea" id="RHEA:20696"/>
        <dbReference type="ChEBI" id="CHEBI:15378"/>
        <dbReference type="ChEBI" id="CHEBI:15379"/>
        <dbReference type="ChEBI" id="CHEBI:16240"/>
        <dbReference type="ChEBI" id="CHEBI:18421"/>
        <dbReference type="EC" id="1.15.1.1"/>
    </reaction>
</comment>
<comment type="cofactor">
    <cofactor evidence="1">
        <name>Mn(2+)</name>
        <dbReference type="ChEBI" id="CHEBI:29035"/>
    </cofactor>
    <text evidence="1">Binds 1 Mn(2+) ion per subunit.</text>
</comment>
<comment type="subunit">
    <text>Homotetramer.</text>
</comment>
<comment type="subcellular location">
    <subcellularLocation>
        <location>Mitochondrion matrix</location>
    </subcellularLocation>
</comment>
<comment type="similarity">
    <text evidence="3">Belongs to the iron/manganese superoxide dismutase family.</text>
</comment>
<name>SODM1_MAIZE</name>
<organism>
    <name type="scientific">Zea mays</name>
    <name type="common">Maize</name>
    <dbReference type="NCBI Taxonomy" id="4577"/>
    <lineage>
        <taxon>Eukaryota</taxon>
        <taxon>Viridiplantae</taxon>
        <taxon>Streptophyta</taxon>
        <taxon>Embryophyta</taxon>
        <taxon>Tracheophyta</taxon>
        <taxon>Spermatophyta</taxon>
        <taxon>Magnoliopsida</taxon>
        <taxon>Liliopsida</taxon>
        <taxon>Poales</taxon>
        <taxon>Poaceae</taxon>
        <taxon>PACMAD clade</taxon>
        <taxon>Panicoideae</taxon>
        <taxon>Andropogonodae</taxon>
        <taxon>Andropogoneae</taxon>
        <taxon>Tripsacinae</taxon>
        <taxon>Zea</taxon>
    </lineage>
</organism>
<feature type="transit peptide" description="Mitochondrion" evidence="2">
    <location>
        <begin position="1"/>
        <end position="31"/>
    </location>
</feature>
<feature type="chain" id="PRO_0000032895" description="Superoxide dismutase [Mn] 3.1, mitochondrial">
    <location>
        <begin position="32"/>
        <end position="235"/>
    </location>
</feature>
<feature type="binding site" evidence="1">
    <location>
        <position position="59"/>
    </location>
    <ligand>
        <name>Mn(2+)</name>
        <dbReference type="ChEBI" id="CHEBI:29035"/>
    </ligand>
</feature>
<feature type="binding site" evidence="1">
    <location>
        <position position="107"/>
    </location>
    <ligand>
        <name>Mn(2+)</name>
        <dbReference type="ChEBI" id="CHEBI:29035"/>
    </ligand>
</feature>
<feature type="binding site" evidence="1">
    <location>
        <position position="196"/>
    </location>
    <ligand>
        <name>Mn(2+)</name>
        <dbReference type="ChEBI" id="CHEBI:29035"/>
    </ligand>
</feature>
<feature type="binding site" evidence="1">
    <location>
        <position position="200"/>
    </location>
    <ligand>
        <name>Mn(2+)</name>
        <dbReference type="ChEBI" id="CHEBI:29035"/>
    </ligand>
</feature>
<evidence type="ECO:0000250" key="1"/>
<evidence type="ECO:0000255" key="2"/>
<evidence type="ECO:0000305" key="3"/>
<reference key="1">
    <citation type="journal article" date="1988" name="Biochim. Biophys. Acta">
        <title>Isolation and characterization of a cDNA for mitochondrial manganese superoxide dismutase (SOD-3) of maize and its relation to other manganese superoxide dismutases.</title>
        <authorList>
            <person name="Redinbaugh M.G."/>
            <person name="Wadsworth G.T."/>
            <person name="Scandalios J.G."/>
        </authorList>
    </citation>
    <scope>NUCLEOTIDE SEQUENCE [MRNA]</scope>
    <source>
        <strain>cv. Wisconsin 64A</strain>
    </source>
</reference>
<dbReference type="EC" id="1.15.1.1"/>
<dbReference type="EMBL" id="X12540">
    <property type="protein sequence ID" value="CAA31058.1"/>
    <property type="molecule type" value="mRNA"/>
</dbReference>
<dbReference type="RefSeq" id="NP_001105742.1">
    <property type="nucleotide sequence ID" value="NM_001112272.2"/>
</dbReference>
<dbReference type="SMR" id="P09233"/>
<dbReference type="FunCoup" id="P09233">
    <property type="interactions" value="2657"/>
</dbReference>
<dbReference type="STRING" id="4577.P09233"/>
<dbReference type="PaxDb" id="4577-GRMZM2G059991_P01"/>
<dbReference type="GeneID" id="542764"/>
<dbReference type="KEGG" id="zma:542764"/>
<dbReference type="MaizeGDB" id="47587"/>
<dbReference type="eggNOG" id="KOG0876">
    <property type="taxonomic scope" value="Eukaryota"/>
</dbReference>
<dbReference type="InParanoid" id="P09233"/>
<dbReference type="OrthoDB" id="239262at2759"/>
<dbReference type="Proteomes" id="UP000007305">
    <property type="component" value="Unplaced"/>
</dbReference>
<dbReference type="ExpressionAtlas" id="P09233">
    <property type="expression patterns" value="baseline and differential"/>
</dbReference>
<dbReference type="GO" id="GO:0005759">
    <property type="term" value="C:mitochondrial matrix"/>
    <property type="evidence" value="ECO:0007669"/>
    <property type="project" value="UniProtKB-SubCell"/>
</dbReference>
<dbReference type="GO" id="GO:0005739">
    <property type="term" value="C:mitochondrion"/>
    <property type="evidence" value="ECO:0000314"/>
    <property type="project" value="AgBase"/>
</dbReference>
<dbReference type="GO" id="GO:0030145">
    <property type="term" value="F:manganese ion binding"/>
    <property type="evidence" value="ECO:0000318"/>
    <property type="project" value="GO_Central"/>
</dbReference>
<dbReference type="GO" id="GO:0004784">
    <property type="term" value="F:superoxide dismutase activity"/>
    <property type="evidence" value="ECO:0000314"/>
    <property type="project" value="AgBase"/>
</dbReference>
<dbReference type="GO" id="GO:0009635">
    <property type="term" value="P:response to herbicide"/>
    <property type="evidence" value="ECO:0000314"/>
    <property type="project" value="AgBase"/>
</dbReference>
<dbReference type="GO" id="GO:0006979">
    <property type="term" value="P:response to oxidative stress"/>
    <property type="evidence" value="ECO:0000304"/>
    <property type="project" value="AgBase"/>
</dbReference>
<dbReference type="GO" id="GO:0000302">
    <property type="term" value="P:response to reactive oxygen species"/>
    <property type="evidence" value="ECO:0000270"/>
    <property type="project" value="AgBase"/>
</dbReference>
<dbReference type="GO" id="GO:0009410">
    <property type="term" value="P:response to xenobiotic stimulus"/>
    <property type="evidence" value="ECO:0000270"/>
    <property type="project" value="AgBase"/>
</dbReference>
<dbReference type="FunFam" id="1.10.287.990:FF:000001">
    <property type="entry name" value="Superoxide dismutase"/>
    <property type="match status" value="1"/>
</dbReference>
<dbReference type="FunFam" id="3.55.40.20:FF:000002">
    <property type="entry name" value="Superoxide dismutase"/>
    <property type="match status" value="1"/>
</dbReference>
<dbReference type="Gene3D" id="1.10.287.990">
    <property type="entry name" value="Fe,Mn superoxide dismutase (SOD) domain"/>
    <property type="match status" value="1"/>
</dbReference>
<dbReference type="Gene3D" id="3.55.40.20">
    <property type="entry name" value="Iron/manganese superoxide dismutase, C-terminal domain"/>
    <property type="match status" value="1"/>
</dbReference>
<dbReference type="InterPro" id="IPR050265">
    <property type="entry name" value="Fe/Mn_Superoxide_Dismutase"/>
</dbReference>
<dbReference type="InterPro" id="IPR001189">
    <property type="entry name" value="Mn/Fe_SOD"/>
</dbReference>
<dbReference type="InterPro" id="IPR019833">
    <property type="entry name" value="Mn/Fe_SOD_BS"/>
</dbReference>
<dbReference type="InterPro" id="IPR019832">
    <property type="entry name" value="Mn/Fe_SOD_C"/>
</dbReference>
<dbReference type="InterPro" id="IPR019831">
    <property type="entry name" value="Mn/Fe_SOD_N"/>
</dbReference>
<dbReference type="InterPro" id="IPR036324">
    <property type="entry name" value="Mn/Fe_SOD_N_sf"/>
</dbReference>
<dbReference type="InterPro" id="IPR036314">
    <property type="entry name" value="SOD_C_sf"/>
</dbReference>
<dbReference type="PANTHER" id="PTHR11404">
    <property type="entry name" value="SUPEROXIDE DISMUTASE 2"/>
    <property type="match status" value="1"/>
</dbReference>
<dbReference type="PANTHER" id="PTHR11404:SF6">
    <property type="entry name" value="SUPEROXIDE DISMUTASE [MN], MITOCHONDRIAL"/>
    <property type="match status" value="1"/>
</dbReference>
<dbReference type="Pfam" id="PF02777">
    <property type="entry name" value="Sod_Fe_C"/>
    <property type="match status" value="1"/>
</dbReference>
<dbReference type="Pfam" id="PF00081">
    <property type="entry name" value="Sod_Fe_N"/>
    <property type="match status" value="1"/>
</dbReference>
<dbReference type="PIRSF" id="PIRSF000349">
    <property type="entry name" value="SODismutase"/>
    <property type="match status" value="1"/>
</dbReference>
<dbReference type="PRINTS" id="PR01703">
    <property type="entry name" value="MNSODISMTASE"/>
</dbReference>
<dbReference type="SUPFAM" id="SSF54719">
    <property type="entry name" value="Fe,Mn superoxide dismutase (SOD), C-terminal domain"/>
    <property type="match status" value="1"/>
</dbReference>
<dbReference type="SUPFAM" id="SSF46609">
    <property type="entry name" value="Fe,Mn superoxide dismutase (SOD), N-terminal domain"/>
    <property type="match status" value="1"/>
</dbReference>
<dbReference type="PROSITE" id="PS00088">
    <property type="entry name" value="SOD_MN"/>
    <property type="match status" value="1"/>
</dbReference>
<keyword id="KW-0464">Manganese</keyword>
<keyword id="KW-0479">Metal-binding</keyword>
<keyword id="KW-0496">Mitochondrion</keyword>
<keyword id="KW-0560">Oxidoreductase</keyword>
<keyword id="KW-1185">Reference proteome</keyword>
<keyword id="KW-0809">Transit peptide</keyword>
<gene>
    <name type="primary">SODA.4</name>
    <name type="synonym">SOD3</name>
    <name type="synonym">SOD3.1</name>
</gene>
<accession>P09233</accession>
<protein>
    <recommendedName>
        <fullName>Superoxide dismutase [Mn] 3.1, mitochondrial</fullName>
        <ecNumber>1.15.1.1</ecNumber>
    </recommendedName>
</protein>